<gene>
    <name evidence="1" type="primary">clpP</name>
    <name type="ordered locus">CBU_0738</name>
</gene>
<keyword id="KW-0002">3D-structure</keyword>
<keyword id="KW-0963">Cytoplasm</keyword>
<keyword id="KW-0378">Hydrolase</keyword>
<keyword id="KW-0645">Protease</keyword>
<keyword id="KW-1185">Reference proteome</keyword>
<keyword id="KW-0720">Serine protease</keyword>
<comment type="function">
    <text evidence="1">Cleaves peptides in various proteins in a process that requires ATP hydrolysis. Has a chymotrypsin-like activity. Plays a major role in the degradation of misfolded proteins.</text>
</comment>
<comment type="catalytic activity">
    <reaction evidence="1">
        <text>Hydrolysis of proteins to small peptides in the presence of ATP and magnesium. alpha-casein is the usual test substrate. In the absence of ATP, only oligopeptides shorter than five residues are hydrolyzed (such as succinyl-Leu-Tyr-|-NHMec, and Leu-Tyr-Leu-|-Tyr-Trp, in which cleavage of the -Tyr-|-Leu- and -Tyr-|-Trp bonds also occurs).</text>
        <dbReference type="EC" id="3.4.21.92"/>
    </reaction>
</comment>
<comment type="subunit">
    <text evidence="1">Fourteen ClpP subunits assemble into 2 heptameric rings which stack back to back to give a disk-like structure with a central cavity, resembling the structure of eukaryotic proteasomes.</text>
</comment>
<comment type="subcellular location">
    <subcellularLocation>
        <location evidence="1">Cytoplasm</location>
    </subcellularLocation>
</comment>
<comment type="similarity">
    <text evidence="1">Belongs to the peptidase S14 family.</text>
</comment>
<protein>
    <recommendedName>
        <fullName evidence="1">ATP-dependent Clp protease proteolytic subunit</fullName>
        <ecNumber evidence="1">3.4.21.92</ecNumber>
    </recommendedName>
    <alternativeName>
        <fullName evidence="1">Endopeptidase Clp</fullName>
    </alternativeName>
</protein>
<dbReference type="EC" id="3.4.21.92" evidence="1"/>
<dbReference type="EMBL" id="AE016828">
    <property type="protein sequence ID" value="AAO90278.1"/>
    <property type="molecule type" value="Genomic_DNA"/>
</dbReference>
<dbReference type="RefSeq" id="NP_819764.1">
    <property type="nucleotide sequence ID" value="NC_002971.4"/>
</dbReference>
<dbReference type="RefSeq" id="WP_010957769.1">
    <property type="nucleotide sequence ID" value="NC_002971.4"/>
</dbReference>
<dbReference type="PDB" id="3Q7H">
    <property type="method" value="X-ray"/>
    <property type="resolution" value="2.50 A"/>
    <property type="chains" value="A/B/C/D/E/F/G/H/I/J/K/L/M/N=1-195"/>
</dbReference>
<dbReference type="PDBsum" id="3Q7H"/>
<dbReference type="SMR" id="Q83DJ2"/>
<dbReference type="STRING" id="227377.CBU_0738"/>
<dbReference type="MEROPS" id="S14.001"/>
<dbReference type="EnsemblBacteria" id="AAO90278">
    <property type="protein sequence ID" value="AAO90278"/>
    <property type="gene ID" value="CBU_0738"/>
</dbReference>
<dbReference type="GeneID" id="1208629"/>
<dbReference type="KEGG" id="cbu:CBU_0738"/>
<dbReference type="PATRIC" id="fig|227377.7.peg.722"/>
<dbReference type="eggNOG" id="COG0740">
    <property type="taxonomic scope" value="Bacteria"/>
</dbReference>
<dbReference type="HOGENOM" id="CLU_058707_3_2_6"/>
<dbReference type="OrthoDB" id="9802800at2"/>
<dbReference type="EvolutionaryTrace" id="Q83DJ2"/>
<dbReference type="Proteomes" id="UP000002671">
    <property type="component" value="Chromosome"/>
</dbReference>
<dbReference type="GO" id="GO:0005737">
    <property type="term" value="C:cytoplasm"/>
    <property type="evidence" value="ECO:0007669"/>
    <property type="project" value="UniProtKB-SubCell"/>
</dbReference>
<dbReference type="GO" id="GO:0009368">
    <property type="term" value="C:endopeptidase Clp complex"/>
    <property type="evidence" value="ECO:0000318"/>
    <property type="project" value="GO_Central"/>
</dbReference>
<dbReference type="GO" id="GO:0004176">
    <property type="term" value="F:ATP-dependent peptidase activity"/>
    <property type="evidence" value="ECO:0000318"/>
    <property type="project" value="GO_Central"/>
</dbReference>
<dbReference type="GO" id="GO:0051117">
    <property type="term" value="F:ATPase binding"/>
    <property type="evidence" value="ECO:0000318"/>
    <property type="project" value="GO_Central"/>
</dbReference>
<dbReference type="GO" id="GO:0004252">
    <property type="term" value="F:serine-type endopeptidase activity"/>
    <property type="evidence" value="ECO:0000318"/>
    <property type="project" value="GO_Central"/>
</dbReference>
<dbReference type="GO" id="GO:0006515">
    <property type="term" value="P:protein quality control for misfolded or incompletely synthesized proteins"/>
    <property type="evidence" value="ECO:0000318"/>
    <property type="project" value="GO_Central"/>
</dbReference>
<dbReference type="CDD" id="cd07017">
    <property type="entry name" value="S14_ClpP_2"/>
    <property type="match status" value="1"/>
</dbReference>
<dbReference type="FunFam" id="3.90.226.10:FF:000001">
    <property type="entry name" value="ATP-dependent Clp protease proteolytic subunit"/>
    <property type="match status" value="1"/>
</dbReference>
<dbReference type="Gene3D" id="3.90.226.10">
    <property type="entry name" value="2-enoyl-CoA Hydratase, Chain A, domain 1"/>
    <property type="match status" value="1"/>
</dbReference>
<dbReference type="HAMAP" id="MF_00444">
    <property type="entry name" value="ClpP"/>
    <property type="match status" value="1"/>
</dbReference>
<dbReference type="InterPro" id="IPR001907">
    <property type="entry name" value="ClpP"/>
</dbReference>
<dbReference type="InterPro" id="IPR029045">
    <property type="entry name" value="ClpP/crotonase-like_dom_sf"/>
</dbReference>
<dbReference type="InterPro" id="IPR023562">
    <property type="entry name" value="ClpP/TepA"/>
</dbReference>
<dbReference type="InterPro" id="IPR018215">
    <property type="entry name" value="ClpP_Ser_AS"/>
</dbReference>
<dbReference type="NCBIfam" id="TIGR00493">
    <property type="entry name" value="clpP"/>
    <property type="match status" value="1"/>
</dbReference>
<dbReference type="NCBIfam" id="NF001368">
    <property type="entry name" value="PRK00277.1"/>
    <property type="match status" value="1"/>
</dbReference>
<dbReference type="NCBIfam" id="NF009205">
    <property type="entry name" value="PRK12553.1"/>
    <property type="match status" value="1"/>
</dbReference>
<dbReference type="PANTHER" id="PTHR10381">
    <property type="entry name" value="ATP-DEPENDENT CLP PROTEASE PROTEOLYTIC SUBUNIT"/>
    <property type="match status" value="1"/>
</dbReference>
<dbReference type="PANTHER" id="PTHR10381:SF70">
    <property type="entry name" value="ATP-DEPENDENT CLP PROTEASE PROTEOLYTIC SUBUNIT"/>
    <property type="match status" value="1"/>
</dbReference>
<dbReference type="Pfam" id="PF00574">
    <property type="entry name" value="CLP_protease"/>
    <property type="match status" value="1"/>
</dbReference>
<dbReference type="PRINTS" id="PR00127">
    <property type="entry name" value="CLPPROTEASEP"/>
</dbReference>
<dbReference type="SUPFAM" id="SSF52096">
    <property type="entry name" value="ClpP/crotonase"/>
    <property type="match status" value="1"/>
</dbReference>
<dbReference type="PROSITE" id="PS00381">
    <property type="entry name" value="CLP_PROTEASE_SER"/>
    <property type="match status" value="1"/>
</dbReference>
<name>CLPP_COXBU</name>
<accession>Q83DJ2</accession>
<reference key="1">
    <citation type="journal article" date="2003" name="Proc. Natl. Acad. Sci. U.S.A.">
        <title>Complete genome sequence of the Q-fever pathogen, Coxiella burnetii.</title>
        <authorList>
            <person name="Seshadri R."/>
            <person name="Paulsen I.T."/>
            <person name="Eisen J.A."/>
            <person name="Read T.D."/>
            <person name="Nelson K.E."/>
            <person name="Nelson W.C."/>
            <person name="Ward N.L."/>
            <person name="Tettelin H."/>
            <person name="Davidsen T.M."/>
            <person name="Beanan M.J."/>
            <person name="DeBoy R.T."/>
            <person name="Daugherty S.C."/>
            <person name="Brinkac L.M."/>
            <person name="Madupu R."/>
            <person name="Dodson R.J."/>
            <person name="Khouri H.M."/>
            <person name="Lee K.H."/>
            <person name="Carty H.A."/>
            <person name="Scanlan D."/>
            <person name="Heinzen R.A."/>
            <person name="Thompson H.A."/>
            <person name="Samuel J.E."/>
            <person name="Fraser C.M."/>
            <person name="Heidelberg J.F."/>
        </authorList>
    </citation>
    <scope>NUCLEOTIDE SEQUENCE [LARGE SCALE GENOMIC DNA]</scope>
    <source>
        <strain>RSA 493 / Nine Mile phase I</strain>
    </source>
</reference>
<sequence>MSVLVPMVVEQTSRGERAYDIYSRLLKDRVIFLVGQVEDHMANLAIAQMLFLESENPNKDINLYINSPGGAVTSAMAIYDTMQFVKPDVRTLCIGQAASAGALLLAGGAKGKRHCLPHSSVMIHQVLGGYQGQGTDIQIHAKQTQRVSDQLNQILAKHTGKDIERVEKDTNRDYFLTPEEAVEYGLIDSIFKERP</sequence>
<proteinExistence type="evidence at protein level"/>
<organism>
    <name type="scientific">Coxiella burnetii (strain RSA 493 / Nine Mile phase I)</name>
    <dbReference type="NCBI Taxonomy" id="227377"/>
    <lineage>
        <taxon>Bacteria</taxon>
        <taxon>Pseudomonadati</taxon>
        <taxon>Pseudomonadota</taxon>
        <taxon>Gammaproteobacteria</taxon>
        <taxon>Legionellales</taxon>
        <taxon>Coxiellaceae</taxon>
        <taxon>Coxiella</taxon>
    </lineage>
</organism>
<feature type="chain" id="PRO_0000179547" description="ATP-dependent Clp protease proteolytic subunit">
    <location>
        <begin position="1"/>
        <end position="195"/>
    </location>
</feature>
<feature type="active site" description="Nucleophile" evidence="1">
    <location>
        <position position="99"/>
    </location>
</feature>
<feature type="active site" evidence="1">
    <location>
        <position position="124"/>
    </location>
</feature>
<feature type="helix" evidence="2">
    <location>
        <begin position="21"/>
        <end position="26"/>
    </location>
</feature>
<feature type="turn" evidence="2">
    <location>
        <begin position="27"/>
        <end position="29"/>
    </location>
</feature>
<feature type="strand" evidence="2">
    <location>
        <begin position="30"/>
        <end position="37"/>
    </location>
</feature>
<feature type="helix" evidence="2">
    <location>
        <begin position="39"/>
        <end position="55"/>
    </location>
</feature>
<feature type="strand" evidence="2">
    <location>
        <begin position="57"/>
        <end position="59"/>
    </location>
</feature>
<feature type="strand" evidence="2">
    <location>
        <begin position="61"/>
        <end position="68"/>
    </location>
</feature>
<feature type="helix" evidence="2">
    <location>
        <begin position="72"/>
        <end position="84"/>
    </location>
</feature>
<feature type="strand" evidence="2">
    <location>
        <begin position="85"/>
        <end position="87"/>
    </location>
</feature>
<feature type="strand" evidence="2">
    <location>
        <begin position="89"/>
        <end position="97"/>
    </location>
</feature>
<feature type="helix" evidence="2">
    <location>
        <begin position="99"/>
        <end position="106"/>
    </location>
</feature>
<feature type="strand" evidence="2">
    <location>
        <begin position="113"/>
        <end position="115"/>
    </location>
</feature>
<feature type="strand" evidence="2">
    <location>
        <begin position="120"/>
        <end position="123"/>
    </location>
</feature>
<feature type="strand" evidence="2">
    <location>
        <begin position="127"/>
        <end position="133"/>
    </location>
</feature>
<feature type="helix" evidence="2">
    <location>
        <begin position="134"/>
        <end position="159"/>
    </location>
</feature>
<feature type="helix" evidence="2">
    <location>
        <begin position="163"/>
        <end position="170"/>
    </location>
</feature>
<feature type="strand" evidence="2">
    <location>
        <begin position="174"/>
        <end position="176"/>
    </location>
</feature>
<feature type="helix" evidence="2">
    <location>
        <begin position="178"/>
        <end position="184"/>
    </location>
</feature>
<feature type="strand" evidence="2">
    <location>
        <begin position="188"/>
        <end position="190"/>
    </location>
</feature>
<evidence type="ECO:0000255" key="1">
    <source>
        <dbReference type="HAMAP-Rule" id="MF_00444"/>
    </source>
</evidence>
<evidence type="ECO:0007829" key="2">
    <source>
        <dbReference type="PDB" id="3Q7H"/>
    </source>
</evidence>